<accession>B5XNB2</accession>
<reference key="1">
    <citation type="journal article" date="2008" name="PLoS Genet.">
        <title>Complete genome sequence of the N2-fixing broad host range endophyte Klebsiella pneumoniae 342 and virulence predictions verified in mice.</title>
        <authorList>
            <person name="Fouts D.E."/>
            <person name="Tyler H.L."/>
            <person name="DeBoy R.T."/>
            <person name="Daugherty S."/>
            <person name="Ren Q."/>
            <person name="Badger J.H."/>
            <person name="Durkin A.S."/>
            <person name="Huot H."/>
            <person name="Shrivastava S."/>
            <person name="Kothari S."/>
            <person name="Dodson R.J."/>
            <person name="Mohamoud Y."/>
            <person name="Khouri H."/>
            <person name="Roesch L.F.W."/>
            <person name="Krogfelt K.A."/>
            <person name="Struve C."/>
            <person name="Triplett E.W."/>
            <person name="Methe B.A."/>
        </authorList>
    </citation>
    <scope>NUCLEOTIDE SEQUENCE [LARGE SCALE GENOMIC DNA]</scope>
    <source>
        <strain>342</strain>
    </source>
</reference>
<sequence>MRLNTLSPAEGSKKAGKRLGRGIGSGLGKTGGRGHKGQKSRSGGGVRRGFEGGQMPLYRRLPKFGFTSRKAMITAEIRLSDLAHVEGDVVDLNALKAANIIGVQIEFAKVILSGEVTRPVTVRGLRVTKGARAAIEAAGGKIEE</sequence>
<name>RL15_KLEP3</name>
<feature type="chain" id="PRO_1000142832" description="Large ribosomal subunit protein uL15">
    <location>
        <begin position="1"/>
        <end position="144"/>
    </location>
</feature>
<feature type="region of interest" description="Disordered" evidence="2">
    <location>
        <begin position="1"/>
        <end position="54"/>
    </location>
</feature>
<feature type="compositionally biased region" description="Gly residues" evidence="2">
    <location>
        <begin position="21"/>
        <end position="31"/>
    </location>
</feature>
<gene>
    <name evidence="1" type="primary">rplO</name>
    <name type="ordered locus">KPK_0417</name>
</gene>
<organism>
    <name type="scientific">Klebsiella pneumoniae (strain 342)</name>
    <dbReference type="NCBI Taxonomy" id="507522"/>
    <lineage>
        <taxon>Bacteria</taxon>
        <taxon>Pseudomonadati</taxon>
        <taxon>Pseudomonadota</taxon>
        <taxon>Gammaproteobacteria</taxon>
        <taxon>Enterobacterales</taxon>
        <taxon>Enterobacteriaceae</taxon>
        <taxon>Klebsiella/Raoultella group</taxon>
        <taxon>Klebsiella</taxon>
        <taxon>Klebsiella pneumoniae complex</taxon>
    </lineage>
</organism>
<keyword id="KW-0687">Ribonucleoprotein</keyword>
<keyword id="KW-0689">Ribosomal protein</keyword>
<keyword id="KW-0694">RNA-binding</keyword>
<keyword id="KW-0699">rRNA-binding</keyword>
<dbReference type="EMBL" id="CP000964">
    <property type="protein sequence ID" value="ACI06893.1"/>
    <property type="molecule type" value="Genomic_DNA"/>
</dbReference>
<dbReference type="SMR" id="B5XNB2"/>
<dbReference type="KEGG" id="kpe:KPK_0417"/>
<dbReference type="HOGENOM" id="CLU_055188_4_2_6"/>
<dbReference type="Proteomes" id="UP000001734">
    <property type="component" value="Chromosome"/>
</dbReference>
<dbReference type="GO" id="GO:0022625">
    <property type="term" value="C:cytosolic large ribosomal subunit"/>
    <property type="evidence" value="ECO:0007669"/>
    <property type="project" value="TreeGrafter"/>
</dbReference>
<dbReference type="GO" id="GO:0019843">
    <property type="term" value="F:rRNA binding"/>
    <property type="evidence" value="ECO:0007669"/>
    <property type="project" value="UniProtKB-UniRule"/>
</dbReference>
<dbReference type="GO" id="GO:0003735">
    <property type="term" value="F:structural constituent of ribosome"/>
    <property type="evidence" value="ECO:0007669"/>
    <property type="project" value="InterPro"/>
</dbReference>
<dbReference type="GO" id="GO:0006412">
    <property type="term" value="P:translation"/>
    <property type="evidence" value="ECO:0007669"/>
    <property type="project" value="UniProtKB-UniRule"/>
</dbReference>
<dbReference type="FunFam" id="3.100.10.10:FF:000003">
    <property type="entry name" value="50S ribosomal protein L15"/>
    <property type="match status" value="1"/>
</dbReference>
<dbReference type="Gene3D" id="3.100.10.10">
    <property type="match status" value="1"/>
</dbReference>
<dbReference type="HAMAP" id="MF_01341">
    <property type="entry name" value="Ribosomal_uL15"/>
    <property type="match status" value="1"/>
</dbReference>
<dbReference type="InterPro" id="IPR030878">
    <property type="entry name" value="Ribosomal_uL15"/>
</dbReference>
<dbReference type="InterPro" id="IPR021131">
    <property type="entry name" value="Ribosomal_uL15/eL18"/>
</dbReference>
<dbReference type="InterPro" id="IPR036227">
    <property type="entry name" value="Ribosomal_uL15/eL18_sf"/>
</dbReference>
<dbReference type="InterPro" id="IPR005749">
    <property type="entry name" value="Ribosomal_uL15_bac-type"/>
</dbReference>
<dbReference type="InterPro" id="IPR001196">
    <property type="entry name" value="Ribosomal_uL15_CS"/>
</dbReference>
<dbReference type="NCBIfam" id="TIGR01071">
    <property type="entry name" value="rplO_bact"/>
    <property type="match status" value="1"/>
</dbReference>
<dbReference type="PANTHER" id="PTHR12934">
    <property type="entry name" value="50S RIBOSOMAL PROTEIN L15"/>
    <property type="match status" value="1"/>
</dbReference>
<dbReference type="PANTHER" id="PTHR12934:SF11">
    <property type="entry name" value="LARGE RIBOSOMAL SUBUNIT PROTEIN UL15M"/>
    <property type="match status" value="1"/>
</dbReference>
<dbReference type="Pfam" id="PF00828">
    <property type="entry name" value="Ribosomal_L27A"/>
    <property type="match status" value="1"/>
</dbReference>
<dbReference type="SUPFAM" id="SSF52080">
    <property type="entry name" value="Ribosomal proteins L15p and L18e"/>
    <property type="match status" value="1"/>
</dbReference>
<dbReference type="PROSITE" id="PS00475">
    <property type="entry name" value="RIBOSOMAL_L15"/>
    <property type="match status" value="1"/>
</dbReference>
<proteinExistence type="inferred from homology"/>
<evidence type="ECO:0000255" key="1">
    <source>
        <dbReference type="HAMAP-Rule" id="MF_01341"/>
    </source>
</evidence>
<evidence type="ECO:0000256" key="2">
    <source>
        <dbReference type="SAM" id="MobiDB-lite"/>
    </source>
</evidence>
<evidence type="ECO:0000305" key="3"/>
<protein>
    <recommendedName>
        <fullName evidence="1">Large ribosomal subunit protein uL15</fullName>
    </recommendedName>
    <alternativeName>
        <fullName evidence="3">50S ribosomal protein L15</fullName>
    </alternativeName>
</protein>
<comment type="function">
    <text evidence="1">Binds to the 23S rRNA.</text>
</comment>
<comment type="subunit">
    <text evidence="1">Part of the 50S ribosomal subunit.</text>
</comment>
<comment type="similarity">
    <text evidence="1">Belongs to the universal ribosomal protein uL15 family.</text>
</comment>